<reference key="1">
    <citation type="journal article" date="1994" name="Proc. Natl. Acad. Sci. U.S.A.">
        <title>Loss of all ndh genes as determined by sequencing the entire chloroplast genome of the black pine Pinus thunbergii.</title>
        <authorList>
            <person name="Wakasugi T."/>
            <person name="Tsudzuki J."/>
            <person name="Ito S."/>
            <person name="Nakashima K."/>
            <person name="Tsudzuki T."/>
            <person name="Sugiura M."/>
        </authorList>
    </citation>
    <scope>NUCLEOTIDE SEQUENCE [LARGE SCALE GENOMIC DNA]</scope>
</reference>
<organism>
    <name type="scientific">Pinus thunbergii</name>
    <name type="common">Japanese black pine</name>
    <name type="synonym">Pinus thunbergiana</name>
    <dbReference type="NCBI Taxonomy" id="3350"/>
    <lineage>
        <taxon>Eukaryota</taxon>
        <taxon>Viridiplantae</taxon>
        <taxon>Streptophyta</taxon>
        <taxon>Embryophyta</taxon>
        <taxon>Tracheophyta</taxon>
        <taxon>Spermatophyta</taxon>
        <taxon>Pinopsida</taxon>
        <taxon>Pinidae</taxon>
        <taxon>Conifers I</taxon>
        <taxon>Pinales</taxon>
        <taxon>Pinaceae</taxon>
        <taxon>Pinus</taxon>
        <taxon>Pinus subgen. Pinus</taxon>
    </lineage>
</organism>
<feature type="initiator methionine" description="Removed" evidence="1">
    <location>
        <position position="1"/>
    </location>
</feature>
<feature type="chain" id="PRO_0000061999" description="Photosystem I iron-sulfur center">
    <location>
        <begin position="2"/>
        <end position="81"/>
    </location>
</feature>
<feature type="domain" description="4Fe-4S ferredoxin-type 1" evidence="2">
    <location>
        <begin position="2"/>
        <end position="31"/>
    </location>
</feature>
<feature type="domain" description="4Fe-4S ferredoxin-type 2" evidence="2">
    <location>
        <begin position="39"/>
        <end position="68"/>
    </location>
</feature>
<feature type="binding site" evidence="2">
    <location>
        <position position="11"/>
    </location>
    <ligand>
        <name>[4Fe-4S] cluster</name>
        <dbReference type="ChEBI" id="CHEBI:49883"/>
        <label>1</label>
    </ligand>
</feature>
<feature type="binding site" evidence="2">
    <location>
        <position position="14"/>
    </location>
    <ligand>
        <name>[4Fe-4S] cluster</name>
        <dbReference type="ChEBI" id="CHEBI:49883"/>
        <label>1</label>
    </ligand>
</feature>
<feature type="binding site" evidence="2">
    <location>
        <position position="17"/>
    </location>
    <ligand>
        <name>[4Fe-4S] cluster</name>
        <dbReference type="ChEBI" id="CHEBI:49883"/>
        <label>1</label>
    </ligand>
</feature>
<feature type="binding site" evidence="2">
    <location>
        <position position="21"/>
    </location>
    <ligand>
        <name>[4Fe-4S] cluster</name>
        <dbReference type="ChEBI" id="CHEBI:49883"/>
        <label>2</label>
    </ligand>
</feature>
<feature type="binding site" evidence="2">
    <location>
        <position position="48"/>
    </location>
    <ligand>
        <name>[4Fe-4S] cluster</name>
        <dbReference type="ChEBI" id="CHEBI:49883"/>
        <label>2</label>
    </ligand>
</feature>
<feature type="binding site" evidence="2">
    <location>
        <position position="51"/>
    </location>
    <ligand>
        <name>[4Fe-4S] cluster</name>
        <dbReference type="ChEBI" id="CHEBI:49883"/>
        <label>2</label>
    </ligand>
</feature>
<feature type="binding site" evidence="2">
    <location>
        <position position="54"/>
    </location>
    <ligand>
        <name>[4Fe-4S] cluster</name>
        <dbReference type="ChEBI" id="CHEBI:49883"/>
        <label>2</label>
    </ligand>
</feature>
<feature type="binding site" evidence="2">
    <location>
        <position position="58"/>
    </location>
    <ligand>
        <name>[4Fe-4S] cluster</name>
        <dbReference type="ChEBI" id="CHEBI:49883"/>
        <label>1</label>
    </ligand>
</feature>
<name>PSAC_PINTH</name>
<protein>
    <recommendedName>
        <fullName evidence="2">Photosystem I iron-sulfur center</fullName>
        <ecNumber evidence="2">1.97.1.12</ecNumber>
    </recommendedName>
    <alternativeName>
        <fullName evidence="2">9 kDa polypeptide</fullName>
    </alternativeName>
    <alternativeName>
        <fullName evidence="2">PSI-C</fullName>
    </alternativeName>
    <alternativeName>
        <fullName evidence="2">Photosystem I subunit VII</fullName>
    </alternativeName>
    <alternativeName>
        <fullName evidence="2">PsaC</fullName>
    </alternativeName>
</protein>
<accession>P41649</accession>
<dbReference type="EC" id="1.97.1.12" evidence="2"/>
<dbReference type="EMBL" id="D17510">
    <property type="protein sequence ID" value="BAA04447.1"/>
    <property type="molecule type" value="Genomic_DNA"/>
</dbReference>
<dbReference type="PIR" id="T07571">
    <property type="entry name" value="T07571"/>
</dbReference>
<dbReference type="RefSeq" id="NP_042492.1">
    <property type="nucleotide sequence ID" value="NC_001631.1"/>
</dbReference>
<dbReference type="SMR" id="P41649"/>
<dbReference type="GeneID" id="809030"/>
<dbReference type="GO" id="GO:0009535">
    <property type="term" value="C:chloroplast thylakoid membrane"/>
    <property type="evidence" value="ECO:0007669"/>
    <property type="project" value="UniProtKB-SubCell"/>
</dbReference>
<dbReference type="GO" id="GO:0009522">
    <property type="term" value="C:photosystem I"/>
    <property type="evidence" value="ECO:0007669"/>
    <property type="project" value="UniProtKB-KW"/>
</dbReference>
<dbReference type="GO" id="GO:0051539">
    <property type="term" value="F:4 iron, 4 sulfur cluster binding"/>
    <property type="evidence" value="ECO:0007669"/>
    <property type="project" value="UniProtKB-KW"/>
</dbReference>
<dbReference type="GO" id="GO:0009055">
    <property type="term" value="F:electron transfer activity"/>
    <property type="evidence" value="ECO:0007669"/>
    <property type="project" value="UniProtKB-UniRule"/>
</dbReference>
<dbReference type="GO" id="GO:0046872">
    <property type="term" value="F:metal ion binding"/>
    <property type="evidence" value="ECO:0007669"/>
    <property type="project" value="UniProtKB-KW"/>
</dbReference>
<dbReference type="GO" id="GO:0016491">
    <property type="term" value="F:oxidoreductase activity"/>
    <property type="evidence" value="ECO:0007669"/>
    <property type="project" value="UniProtKB-KW"/>
</dbReference>
<dbReference type="GO" id="GO:0009773">
    <property type="term" value="P:photosynthetic electron transport in photosystem I"/>
    <property type="evidence" value="ECO:0007669"/>
    <property type="project" value="InterPro"/>
</dbReference>
<dbReference type="FunFam" id="3.30.70.20:FF:000001">
    <property type="entry name" value="Photosystem I iron-sulfur center"/>
    <property type="match status" value="1"/>
</dbReference>
<dbReference type="Gene3D" id="3.30.70.20">
    <property type="match status" value="1"/>
</dbReference>
<dbReference type="HAMAP" id="MF_01303">
    <property type="entry name" value="PSI_PsaC"/>
    <property type="match status" value="1"/>
</dbReference>
<dbReference type="InterPro" id="IPR017896">
    <property type="entry name" value="4Fe4S_Fe-S-bd"/>
</dbReference>
<dbReference type="InterPro" id="IPR017900">
    <property type="entry name" value="4Fe4S_Fe_S_CS"/>
</dbReference>
<dbReference type="InterPro" id="IPR050157">
    <property type="entry name" value="PSI_iron-sulfur_center"/>
</dbReference>
<dbReference type="InterPro" id="IPR017491">
    <property type="entry name" value="PSI_PsaC"/>
</dbReference>
<dbReference type="NCBIfam" id="TIGR03048">
    <property type="entry name" value="PS_I_psaC"/>
    <property type="match status" value="1"/>
</dbReference>
<dbReference type="PANTHER" id="PTHR24960:SF79">
    <property type="entry name" value="PHOTOSYSTEM I IRON-SULFUR CENTER"/>
    <property type="match status" value="1"/>
</dbReference>
<dbReference type="PANTHER" id="PTHR24960">
    <property type="entry name" value="PHOTOSYSTEM I IRON-SULFUR CENTER-RELATED"/>
    <property type="match status" value="1"/>
</dbReference>
<dbReference type="Pfam" id="PF14697">
    <property type="entry name" value="Fer4_21"/>
    <property type="match status" value="1"/>
</dbReference>
<dbReference type="SUPFAM" id="SSF54862">
    <property type="entry name" value="4Fe-4S ferredoxins"/>
    <property type="match status" value="1"/>
</dbReference>
<dbReference type="PROSITE" id="PS00198">
    <property type="entry name" value="4FE4S_FER_1"/>
    <property type="match status" value="2"/>
</dbReference>
<dbReference type="PROSITE" id="PS51379">
    <property type="entry name" value="4FE4S_FER_2"/>
    <property type="match status" value="2"/>
</dbReference>
<keyword id="KW-0004">4Fe-4S</keyword>
<keyword id="KW-0150">Chloroplast</keyword>
<keyword id="KW-0249">Electron transport</keyword>
<keyword id="KW-0408">Iron</keyword>
<keyword id="KW-0411">Iron-sulfur</keyword>
<keyword id="KW-0472">Membrane</keyword>
<keyword id="KW-0479">Metal-binding</keyword>
<keyword id="KW-0560">Oxidoreductase</keyword>
<keyword id="KW-0602">Photosynthesis</keyword>
<keyword id="KW-0603">Photosystem I</keyword>
<keyword id="KW-0934">Plastid</keyword>
<keyword id="KW-0677">Repeat</keyword>
<keyword id="KW-0793">Thylakoid</keyword>
<keyword id="KW-0813">Transport</keyword>
<comment type="function">
    <text evidence="2">Apoprotein for the two 4Fe-4S centers FA and FB of photosystem I (PSI); essential for photochemical activity. FB is the terminal electron acceptor of PSI, donating electrons to ferredoxin. The C-terminus interacts with PsaA/B/D and helps assemble the protein into the PSI complex. Required for binding of PsaD and PsaE to PSI. PSI is a plastocyanin-ferredoxin oxidoreductase, converting photonic excitation into a charge separation, which transfers an electron from the donor P700 chlorophyll pair to the spectroscopically characterized acceptors A0, A1, FX, FA and FB in turn.</text>
</comment>
<comment type="catalytic activity">
    <reaction evidence="2">
        <text>reduced [plastocyanin] + hnu + oxidized [2Fe-2S]-[ferredoxin] = oxidized [plastocyanin] + reduced [2Fe-2S]-[ferredoxin]</text>
        <dbReference type="Rhea" id="RHEA:30407"/>
        <dbReference type="Rhea" id="RHEA-COMP:10000"/>
        <dbReference type="Rhea" id="RHEA-COMP:10001"/>
        <dbReference type="Rhea" id="RHEA-COMP:10039"/>
        <dbReference type="Rhea" id="RHEA-COMP:10040"/>
        <dbReference type="ChEBI" id="CHEBI:29036"/>
        <dbReference type="ChEBI" id="CHEBI:30212"/>
        <dbReference type="ChEBI" id="CHEBI:33737"/>
        <dbReference type="ChEBI" id="CHEBI:33738"/>
        <dbReference type="ChEBI" id="CHEBI:49552"/>
        <dbReference type="EC" id="1.97.1.12"/>
    </reaction>
</comment>
<comment type="cofactor">
    <cofactor evidence="2">
        <name>[4Fe-4S] cluster</name>
        <dbReference type="ChEBI" id="CHEBI:49883"/>
    </cofactor>
    <text evidence="2">Binds 2 [4Fe-4S] clusters. Cluster 2 is most probably the spectroscopically characterized electron acceptor FA and cluster 1 is most probably FB.</text>
</comment>
<comment type="subunit">
    <text evidence="2">The eukaryotic PSI reaction center is composed of at least 11 subunits.</text>
</comment>
<comment type="subcellular location">
    <subcellularLocation>
        <location evidence="2">Plastid</location>
        <location evidence="2">Chloroplast thylakoid membrane</location>
        <topology evidence="2">Peripheral membrane protein</topology>
        <orientation evidence="2">Stromal side</orientation>
    </subcellularLocation>
</comment>
<gene>
    <name evidence="2" type="primary">psaC</name>
    <name type="synonym">frxA</name>
</gene>
<proteinExistence type="inferred from homology"/>
<evidence type="ECO:0000250" key="1"/>
<evidence type="ECO:0000255" key="2">
    <source>
        <dbReference type="HAMAP-Rule" id="MF_01303"/>
    </source>
</evidence>
<geneLocation type="chloroplast"/>
<sequence>MAHSVKIYDTCIGCTQCVRACPTDVLEMIPWEGCKAKQIASAPRTEDCAGCKRCESACPTDFLSVRVYLWHETTRSMGLAY</sequence>